<organism>
    <name type="scientific">Vibrio anguillarum</name>
    <name type="common">Listonella anguillarum</name>
    <dbReference type="NCBI Taxonomy" id="55601"/>
    <lineage>
        <taxon>Bacteria</taxon>
        <taxon>Pseudomonadati</taxon>
        <taxon>Pseudomonadota</taxon>
        <taxon>Gammaproteobacteria</taxon>
        <taxon>Vibrionales</taxon>
        <taxon>Vibrionaceae</taxon>
        <taxon>Vibrio</taxon>
    </lineage>
</organism>
<reference key="1">
    <citation type="submission" date="2004-01" db="EMBL/GenBank/DDBJ databases">
        <title>Cloning, sequencing and transcriptional regulation of Na+-dependent NADH:quinone oxidoreductase gene of Vibrio anguillarum, a fish pathogen.</title>
        <authorList>
            <person name="Fujiwara-Nagata E."/>
            <person name="Eguchi Y."/>
            <person name="Utsumi R."/>
            <person name="Eguchi M."/>
        </authorList>
    </citation>
    <scope>NUCLEOTIDE SEQUENCE [GENOMIC DNA]</scope>
</reference>
<dbReference type="EC" id="7.2.1.1" evidence="1"/>
<dbReference type="EMBL" id="AB159077">
    <property type="protein sequence ID" value="BAD14950.1"/>
    <property type="molecule type" value="Genomic_DNA"/>
</dbReference>
<dbReference type="RefSeq" id="WP_013856173.1">
    <property type="nucleotide sequence ID" value="NZ_VTYO01000002.1"/>
</dbReference>
<dbReference type="SMR" id="Q75R62"/>
<dbReference type="STRING" id="55601.AA407_03525"/>
<dbReference type="OMA" id="EVDNPRW"/>
<dbReference type="OrthoDB" id="9786835at2"/>
<dbReference type="GO" id="GO:0005886">
    <property type="term" value="C:plasma membrane"/>
    <property type="evidence" value="ECO:0007669"/>
    <property type="project" value="UniProtKB-SubCell"/>
</dbReference>
<dbReference type="GO" id="GO:0010181">
    <property type="term" value="F:FMN binding"/>
    <property type="evidence" value="ECO:0007669"/>
    <property type="project" value="UniProtKB-UniRule"/>
</dbReference>
<dbReference type="GO" id="GO:0016655">
    <property type="term" value="F:oxidoreductase activity, acting on NAD(P)H, quinone or similar compound as acceptor"/>
    <property type="evidence" value="ECO:0007669"/>
    <property type="project" value="UniProtKB-UniRule"/>
</dbReference>
<dbReference type="GO" id="GO:0006814">
    <property type="term" value="P:sodium ion transport"/>
    <property type="evidence" value="ECO:0007669"/>
    <property type="project" value="UniProtKB-UniRule"/>
</dbReference>
<dbReference type="HAMAP" id="MF_00427">
    <property type="entry name" value="NqrC"/>
    <property type="match status" value="1"/>
</dbReference>
<dbReference type="InterPro" id="IPR007329">
    <property type="entry name" value="FMN-bd"/>
</dbReference>
<dbReference type="InterPro" id="IPR010204">
    <property type="entry name" value="NqrC"/>
</dbReference>
<dbReference type="NCBIfam" id="TIGR01938">
    <property type="entry name" value="nqrC"/>
    <property type="match status" value="1"/>
</dbReference>
<dbReference type="NCBIfam" id="NF003746">
    <property type="entry name" value="PRK05346.1-1"/>
    <property type="match status" value="1"/>
</dbReference>
<dbReference type="NCBIfam" id="NF003749">
    <property type="entry name" value="PRK05346.1-5"/>
    <property type="match status" value="1"/>
</dbReference>
<dbReference type="PANTHER" id="PTHR37838">
    <property type="entry name" value="NA(+)-TRANSLOCATING NADH-QUINONE REDUCTASE SUBUNIT C"/>
    <property type="match status" value="1"/>
</dbReference>
<dbReference type="PANTHER" id="PTHR37838:SF1">
    <property type="entry name" value="NA(+)-TRANSLOCATING NADH-QUINONE REDUCTASE SUBUNIT C"/>
    <property type="match status" value="1"/>
</dbReference>
<dbReference type="Pfam" id="PF04205">
    <property type="entry name" value="FMN_bind"/>
    <property type="match status" value="1"/>
</dbReference>
<dbReference type="PIRSF" id="PIRSF009437">
    <property type="entry name" value="NQR-1_subunit_C"/>
    <property type="match status" value="1"/>
</dbReference>
<dbReference type="SMART" id="SM00900">
    <property type="entry name" value="FMN_bind"/>
    <property type="match status" value="1"/>
</dbReference>
<name>NQRC_VIBAN</name>
<accession>Q75R62</accession>
<protein>
    <recommendedName>
        <fullName evidence="1">Na(+)-translocating NADH-quinone reductase subunit C</fullName>
        <shortName evidence="1">Na(+)-NQR subunit C</shortName>
        <shortName evidence="1">Na(+)-translocating NQR subunit C</shortName>
        <ecNumber evidence="1">7.2.1.1</ecNumber>
    </recommendedName>
    <alternativeName>
        <fullName evidence="1">NQR complex subunit C</fullName>
    </alternativeName>
    <alternativeName>
        <fullName evidence="1">NQR-1 subunit C</fullName>
    </alternativeName>
</protein>
<evidence type="ECO:0000255" key="1">
    <source>
        <dbReference type="HAMAP-Rule" id="MF_00427"/>
    </source>
</evidence>
<gene>
    <name evidence="1" type="primary">nqrC</name>
</gene>
<keyword id="KW-0997">Cell inner membrane</keyword>
<keyword id="KW-1003">Cell membrane</keyword>
<keyword id="KW-0285">Flavoprotein</keyword>
<keyword id="KW-0288">FMN</keyword>
<keyword id="KW-0406">Ion transport</keyword>
<keyword id="KW-0472">Membrane</keyword>
<keyword id="KW-0520">NAD</keyword>
<keyword id="KW-0597">Phosphoprotein</keyword>
<keyword id="KW-0915">Sodium</keyword>
<keyword id="KW-0739">Sodium transport</keyword>
<keyword id="KW-1278">Translocase</keyword>
<keyword id="KW-0812">Transmembrane</keyword>
<keyword id="KW-1133">Transmembrane helix</keyword>
<keyword id="KW-0813">Transport</keyword>
<keyword id="KW-0830">Ubiquinone</keyword>
<sequence>MASNNDSIKKTLFVVIALSLVCSIIVSTAAVGLRDKQKVNAVLDKQSKIVEVAGINESGSVPELFAKYIEPRLIDFKTGNFVDGDATAYDQRKASKDPAQSIKLTAEQDKAKIIRRANTGVVYLVKSGDEISKVIVPVHGNGLWSMMYAFVAVETDGNTVSGITYYEQGETPGLGGEVENPSWRAQFVGKKLFDDNHQPAIKVVKGGAPAGSEHGVDGLSGATLTSNGVQHTFDFWLGDMGFGPFLAKVRDGGLN</sequence>
<proteinExistence type="inferred from homology"/>
<feature type="chain" id="PRO_0000214222" description="Na(+)-translocating NADH-quinone reductase subunit C">
    <location>
        <begin position="1"/>
        <end position="255"/>
    </location>
</feature>
<feature type="transmembrane region" description="Helical" evidence="1">
    <location>
        <begin position="12"/>
        <end position="32"/>
    </location>
</feature>
<feature type="modified residue" description="FMN phosphoryl threonine" evidence="1">
    <location>
        <position position="223"/>
    </location>
</feature>
<comment type="function">
    <text evidence="1">NQR complex catalyzes the reduction of ubiquinone-1 to ubiquinol by two successive reactions, coupled with the transport of Na(+) ions from the cytoplasm to the periplasm. NqrA to NqrE are probably involved in the second step, the conversion of ubisemiquinone to ubiquinol.</text>
</comment>
<comment type="catalytic activity">
    <reaction evidence="1">
        <text>a ubiquinone + n Na(+)(in) + NADH + H(+) = a ubiquinol + n Na(+)(out) + NAD(+)</text>
        <dbReference type="Rhea" id="RHEA:47748"/>
        <dbReference type="Rhea" id="RHEA-COMP:9565"/>
        <dbReference type="Rhea" id="RHEA-COMP:9566"/>
        <dbReference type="ChEBI" id="CHEBI:15378"/>
        <dbReference type="ChEBI" id="CHEBI:16389"/>
        <dbReference type="ChEBI" id="CHEBI:17976"/>
        <dbReference type="ChEBI" id="CHEBI:29101"/>
        <dbReference type="ChEBI" id="CHEBI:57540"/>
        <dbReference type="ChEBI" id="CHEBI:57945"/>
        <dbReference type="EC" id="7.2.1.1"/>
    </reaction>
</comment>
<comment type="cofactor">
    <cofactor evidence="1">
        <name>FMN</name>
        <dbReference type="ChEBI" id="CHEBI:58210"/>
    </cofactor>
</comment>
<comment type="subunit">
    <text evidence="1">Composed of six subunits; NqrA, NqrB, NqrC, NqrD, NqrE and NqrF.</text>
</comment>
<comment type="subcellular location">
    <subcellularLocation>
        <location evidence="1">Cell inner membrane</location>
        <topology evidence="1">Single-pass membrane protein</topology>
    </subcellularLocation>
</comment>
<comment type="similarity">
    <text evidence="1">Belongs to the NqrC family.</text>
</comment>